<organism>
    <name type="scientific">Shewanella oneidensis (strain ATCC 700550 / JCM 31522 / CIP 106686 / LMG 19005 / NCIMB 14063 / MR-1)</name>
    <dbReference type="NCBI Taxonomy" id="211586"/>
    <lineage>
        <taxon>Bacteria</taxon>
        <taxon>Pseudomonadati</taxon>
        <taxon>Pseudomonadota</taxon>
        <taxon>Gammaproteobacteria</taxon>
        <taxon>Alteromonadales</taxon>
        <taxon>Shewanellaceae</taxon>
        <taxon>Shewanella</taxon>
    </lineage>
</organism>
<accession>Q8EJG1</accession>
<comment type="function">
    <text evidence="1">Catalyzes the decarboxylation of 3-octaprenyl-4-hydroxy benzoate to 2-octaprenylphenol, an intermediate step in ubiquinone biosynthesis.</text>
</comment>
<comment type="catalytic activity">
    <reaction evidence="1">
        <text>a 4-hydroxy-3-(all-trans-polyprenyl)benzoate + H(+) = a 2-(all-trans-polyprenyl)phenol + CO2</text>
        <dbReference type="Rhea" id="RHEA:41680"/>
        <dbReference type="Rhea" id="RHEA-COMP:9514"/>
        <dbReference type="Rhea" id="RHEA-COMP:9516"/>
        <dbReference type="ChEBI" id="CHEBI:1269"/>
        <dbReference type="ChEBI" id="CHEBI:15378"/>
        <dbReference type="ChEBI" id="CHEBI:16526"/>
        <dbReference type="ChEBI" id="CHEBI:78396"/>
        <dbReference type="EC" id="4.1.1.98"/>
    </reaction>
</comment>
<comment type="cofactor">
    <cofactor evidence="1">
        <name>prenylated FMN</name>
        <dbReference type="ChEBI" id="CHEBI:87746"/>
    </cofactor>
    <text evidence="1">Binds 1 prenylated FMN per subunit.</text>
</comment>
<comment type="cofactor">
    <cofactor evidence="1">
        <name>Mn(2+)</name>
        <dbReference type="ChEBI" id="CHEBI:29035"/>
    </cofactor>
</comment>
<comment type="pathway">
    <text evidence="1">Cofactor biosynthesis; ubiquinone biosynthesis.</text>
</comment>
<comment type="subunit">
    <text evidence="1">Homohexamer.</text>
</comment>
<comment type="subcellular location">
    <subcellularLocation>
        <location evidence="1">Cell membrane</location>
        <topology evidence="1">Peripheral membrane protein</topology>
    </subcellularLocation>
</comment>
<comment type="similarity">
    <text evidence="1">Belongs to the UbiD family.</text>
</comment>
<evidence type="ECO:0000255" key="1">
    <source>
        <dbReference type="HAMAP-Rule" id="MF_01636"/>
    </source>
</evidence>
<protein>
    <recommendedName>
        <fullName evidence="1">3-octaprenyl-4-hydroxybenzoate carboxy-lyase</fullName>
        <ecNumber evidence="1">4.1.1.98</ecNumber>
    </recommendedName>
    <alternativeName>
        <fullName evidence="1">Polyprenyl p-hydroxybenzoate decarboxylase</fullName>
    </alternativeName>
</protein>
<proteinExistence type="inferred from homology"/>
<reference key="1">
    <citation type="journal article" date="2002" name="Nat. Biotechnol.">
        <title>Genome sequence of the dissimilatory metal ion-reducing bacterium Shewanella oneidensis.</title>
        <authorList>
            <person name="Heidelberg J.F."/>
            <person name="Paulsen I.T."/>
            <person name="Nelson K.E."/>
            <person name="Gaidos E.J."/>
            <person name="Nelson W.C."/>
            <person name="Read T.D."/>
            <person name="Eisen J.A."/>
            <person name="Seshadri R."/>
            <person name="Ward N.L."/>
            <person name="Methe B.A."/>
            <person name="Clayton R.A."/>
            <person name="Meyer T."/>
            <person name="Tsapin A."/>
            <person name="Scott J."/>
            <person name="Beanan M.J."/>
            <person name="Brinkac L.M."/>
            <person name="Daugherty S.C."/>
            <person name="DeBoy R.T."/>
            <person name="Dodson R.J."/>
            <person name="Durkin A.S."/>
            <person name="Haft D.H."/>
            <person name="Kolonay J.F."/>
            <person name="Madupu R."/>
            <person name="Peterson J.D."/>
            <person name="Umayam L.A."/>
            <person name="White O."/>
            <person name="Wolf A.M."/>
            <person name="Vamathevan J.J."/>
            <person name="Weidman J.F."/>
            <person name="Impraim M."/>
            <person name="Lee K."/>
            <person name="Berry K.J."/>
            <person name="Lee C."/>
            <person name="Mueller J."/>
            <person name="Khouri H.M."/>
            <person name="Gill J."/>
            <person name="Utterback T.R."/>
            <person name="McDonald L.A."/>
            <person name="Feldblyum T.V."/>
            <person name="Smith H.O."/>
            <person name="Venter J.C."/>
            <person name="Nealson K.H."/>
            <person name="Fraser C.M."/>
        </authorList>
    </citation>
    <scope>NUCLEOTIDE SEQUENCE [LARGE SCALE GENOMIC DNA]</scope>
    <source>
        <strain>ATCC 700550 / JCM 31522 / CIP 106686 / LMG 19005 / NCIMB 14063 / MR-1</strain>
    </source>
</reference>
<name>UBID_SHEON</name>
<dbReference type="EC" id="4.1.1.98" evidence="1"/>
<dbReference type="EMBL" id="AE014299">
    <property type="protein sequence ID" value="AAN53587.1"/>
    <property type="molecule type" value="Genomic_DNA"/>
</dbReference>
<dbReference type="RefSeq" id="NP_716142.1">
    <property type="nucleotide sequence ID" value="NC_004347.2"/>
</dbReference>
<dbReference type="RefSeq" id="WP_011070851.1">
    <property type="nucleotide sequence ID" value="NC_004347.2"/>
</dbReference>
<dbReference type="SMR" id="Q8EJG1"/>
<dbReference type="STRING" id="211586.SO_0506"/>
<dbReference type="PaxDb" id="211586-SO_0506"/>
<dbReference type="KEGG" id="son:SO_0506"/>
<dbReference type="PATRIC" id="fig|211586.12.peg.489"/>
<dbReference type="eggNOG" id="COG0043">
    <property type="taxonomic scope" value="Bacteria"/>
</dbReference>
<dbReference type="HOGENOM" id="CLU_023348_4_1_6"/>
<dbReference type="OrthoDB" id="9809841at2"/>
<dbReference type="PhylomeDB" id="Q8EJG1"/>
<dbReference type="BioCyc" id="SONE211586:G1GMP-481-MONOMER"/>
<dbReference type="UniPathway" id="UPA00232"/>
<dbReference type="Proteomes" id="UP000008186">
    <property type="component" value="Chromosome"/>
</dbReference>
<dbReference type="GO" id="GO:0005737">
    <property type="term" value="C:cytoplasm"/>
    <property type="evidence" value="ECO:0000318"/>
    <property type="project" value="GO_Central"/>
</dbReference>
<dbReference type="GO" id="GO:0005829">
    <property type="term" value="C:cytosol"/>
    <property type="evidence" value="ECO:0000318"/>
    <property type="project" value="GO_Central"/>
</dbReference>
<dbReference type="GO" id="GO:0005886">
    <property type="term" value="C:plasma membrane"/>
    <property type="evidence" value="ECO:0007669"/>
    <property type="project" value="UniProtKB-SubCell"/>
</dbReference>
<dbReference type="GO" id="GO:0008694">
    <property type="term" value="F:3-octaprenyl-4-hydroxybenzoate carboxy-lyase activity"/>
    <property type="evidence" value="ECO:0000318"/>
    <property type="project" value="GO_Central"/>
</dbReference>
<dbReference type="GO" id="GO:0046872">
    <property type="term" value="F:metal ion binding"/>
    <property type="evidence" value="ECO:0007669"/>
    <property type="project" value="UniProtKB-KW"/>
</dbReference>
<dbReference type="GO" id="GO:0006744">
    <property type="term" value="P:ubiquinone biosynthetic process"/>
    <property type="evidence" value="ECO:0000318"/>
    <property type="project" value="GO_Central"/>
</dbReference>
<dbReference type="FunFam" id="1.20.5.570:FF:000001">
    <property type="entry name" value="3-octaprenyl-4-hydroxybenzoate carboxy-lyase"/>
    <property type="match status" value="1"/>
</dbReference>
<dbReference type="FunFam" id="3.40.1670.10:FF:000001">
    <property type="entry name" value="3-octaprenyl-4-hydroxybenzoate carboxy-lyase"/>
    <property type="match status" value="1"/>
</dbReference>
<dbReference type="Gene3D" id="1.20.5.570">
    <property type="entry name" value="Single helix bin"/>
    <property type="match status" value="1"/>
</dbReference>
<dbReference type="Gene3D" id="3.40.1670.10">
    <property type="entry name" value="UbiD C-terminal domain-like"/>
    <property type="match status" value="1"/>
</dbReference>
<dbReference type="HAMAP" id="MF_01636">
    <property type="entry name" value="UbiD"/>
    <property type="match status" value="1"/>
</dbReference>
<dbReference type="InterPro" id="IPR002830">
    <property type="entry name" value="UbiD"/>
</dbReference>
<dbReference type="InterPro" id="IPR049381">
    <property type="entry name" value="UbiD-like_C"/>
</dbReference>
<dbReference type="InterPro" id="IPR049383">
    <property type="entry name" value="UbiD-like_N"/>
</dbReference>
<dbReference type="InterPro" id="IPR023677">
    <property type="entry name" value="UbiD_bacteria"/>
</dbReference>
<dbReference type="InterPro" id="IPR048304">
    <property type="entry name" value="UbiD_Rift_dom"/>
</dbReference>
<dbReference type="NCBIfam" id="NF008175">
    <property type="entry name" value="PRK10922.1"/>
    <property type="match status" value="1"/>
</dbReference>
<dbReference type="NCBIfam" id="TIGR00148">
    <property type="entry name" value="UbiD family decarboxylase"/>
    <property type="match status" value="1"/>
</dbReference>
<dbReference type="PANTHER" id="PTHR30108">
    <property type="entry name" value="3-OCTAPRENYL-4-HYDROXYBENZOATE CARBOXY-LYASE-RELATED"/>
    <property type="match status" value="1"/>
</dbReference>
<dbReference type="PANTHER" id="PTHR30108:SF17">
    <property type="entry name" value="FERULIC ACID DECARBOXYLASE 1"/>
    <property type="match status" value="1"/>
</dbReference>
<dbReference type="Pfam" id="PF01977">
    <property type="entry name" value="UbiD"/>
    <property type="match status" value="1"/>
</dbReference>
<dbReference type="Pfam" id="PF20696">
    <property type="entry name" value="UbiD_C"/>
    <property type="match status" value="1"/>
</dbReference>
<dbReference type="Pfam" id="PF20695">
    <property type="entry name" value="UbiD_N"/>
    <property type="match status" value="1"/>
</dbReference>
<dbReference type="SUPFAM" id="SSF50475">
    <property type="entry name" value="FMN-binding split barrel"/>
    <property type="match status" value="1"/>
</dbReference>
<dbReference type="SUPFAM" id="SSF143968">
    <property type="entry name" value="UbiD C-terminal domain-like"/>
    <property type="match status" value="1"/>
</dbReference>
<sequence length="488" mass="54965">MSFKDLRSFIDHLEANGELKRISYPVDPHLEMTEIADRVLRAQGPALLFENPTNHSMPVLANLFGTPKRVAMALGKDDPLALREVGELLAFLKEPEPPRGFKDAISKIPMFKQALNMPPKTVRNPACQQVVKTGDDVDLTQLPIQHCWPGDVAPLVTWGLTITKGPRKSRQNLGIYRQQLLGKNKLIMRWLSHRGGALDFADFKEQFPGERYPVVVALGSDPVTILGAVTPVPDAMSEYAFAGLLRGERTEVCKALSCDLEVPASSEIILEGYIDPNEMAEEGPYGDHTGYYNETDKFPVFTVTHITHRKDPIYHSTYTGRPPDEPAMLGVALNEVFVPILRKQYPEIIDFYLPPEGCSYRMAVISIRKQYPGHAKRVMMGAWSFLRQFMYTKFIVVVDDDVNCRDWNDVIWAITTRMDPKRDTVMIDNTPIDYLDFASPVVGLGSKMGLDATNKWEGETNREWGTPIVMDPKVKQKIDSIWDELGIS</sequence>
<gene>
    <name evidence="1" type="primary">ubiD</name>
    <name type="ordered locus">SO_0506</name>
</gene>
<feature type="chain" id="PRO_0000267696" description="3-octaprenyl-4-hydroxybenzoate carboxy-lyase">
    <location>
        <begin position="1"/>
        <end position="488"/>
    </location>
</feature>
<feature type="active site" description="Proton donor" evidence="1">
    <location>
        <position position="287"/>
    </location>
</feature>
<feature type="binding site" evidence="1">
    <location>
        <position position="172"/>
    </location>
    <ligand>
        <name>Mn(2+)</name>
        <dbReference type="ChEBI" id="CHEBI:29035"/>
    </ligand>
</feature>
<feature type="binding site" evidence="1">
    <location>
        <begin position="175"/>
        <end position="177"/>
    </location>
    <ligand>
        <name>prenylated FMN</name>
        <dbReference type="ChEBI" id="CHEBI:87746"/>
    </ligand>
</feature>
<feature type="binding site" evidence="1">
    <location>
        <begin position="189"/>
        <end position="191"/>
    </location>
    <ligand>
        <name>prenylated FMN</name>
        <dbReference type="ChEBI" id="CHEBI:87746"/>
    </ligand>
</feature>
<feature type="binding site" evidence="1">
    <location>
        <begin position="194"/>
        <end position="195"/>
    </location>
    <ligand>
        <name>prenylated FMN</name>
        <dbReference type="ChEBI" id="CHEBI:87746"/>
    </ligand>
</feature>
<feature type="binding site" evidence="1">
    <location>
        <position position="238"/>
    </location>
    <ligand>
        <name>Mn(2+)</name>
        <dbReference type="ChEBI" id="CHEBI:29035"/>
    </ligand>
</feature>
<keyword id="KW-1003">Cell membrane</keyword>
<keyword id="KW-0210">Decarboxylase</keyword>
<keyword id="KW-0285">Flavoprotein</keyword>
<keyword id="KW-0288">FMN</keyword>
<keyword id="KW-0456">Lyase</keyword>
<keyword id="KW-0464">Manganese</keyword>
<keyword id="KW-0472">Membrane</keyword>
<keyword id="KW-0479">Metal-binding</keyword>
<keyword id="KW-1185">Reference proteome</keyword>
<keyword id="KW-0831">Ubiquinone biosynthesis</keyword>